<gene>
    <name evidence="1" type="primary">lgt</name>
    <name type="ordered locus">Bcep18194_A5791</name>
</gene>
<accession>Q39DT1</accession>
<reference key="1">
    <citation type="submission" date="2005-10" db="EMBL/GenBank/DDBJ databases">
        <title>Complete sequence of chromosome 1 of Burkholderia sp. 383.</title>
        <authorList>
            <consortium name="US DOE Joint Genome Institute"/>
            <person name="Copeland A."/>
            <person name="Lucas S."/>
            <person name="Lapidus A."/>
            <person name="Barry K."/>
            <person name="Detter J.C."/>
            <person name="Glavina T."/>
            <person name="Hammon N."/>
            <person name="Israni S."/>
            <person name="Pitluck S."/>
            <person name="Chain P."/>
            <person name="Malfatti S."/>
            <person name="Shin M."/>
            <person name="Vergez L."/>
            <person name="Schmutz J."/>
            <person name="Larimer F."/>
            <person name="Land M."/>
            <person name="Kyrpides N."/>
            <person name="Lykidis A."/>
            <person name="Richardson P."/>
        </authorList>
    </citation>
    <scope>NUCLEOTIDE SEQUENCE [LARGE SCALE GENOMIC DNA]</scope>
    <source>
        <strain>ATCC 17760 / DSM 23089 / LMG 22485 / NCIMB 9086 / R18194 / 383</strain>
    </source>
</reference>
<keyword id="KW-0997">Cell inner membrane</keyword>
<keyword id="KW-1003">Cell membrane</keyword>
<keyword id="KW-0472">Membrane</keyword>
<keyword id="KW-0808">Transferase</keyword>
<keyword id="KW-0812">Transmembrane</keyword>
<keyword id="KW-1133">Transmembrane helix</keyword>
<organism>
    <name type="scientific">Burkholderia lata (strain ATCC 17760 / DSM 23089 / LMG 22485 / NCIMB 9086 / R18194 / 383)</name>
    <dbReference type="NCBI Taxonomy" id="482957"/>
    <lineage>
        <taxon>Bacteria</taxon>
        <taxon>Pseudomonadati</taxon>
        <taxon>Pseudomonadota</taxon>
        <taxon>Betaproteobacteria</taxon>
        <taxon>Burkholderiales</taxon>
        <taxon>Burkholderiaceae</taxon>
        <taxon>Burkholderia</taxon>
        <taxon>Burkholderia cepacia complex</taxon>
    </lineage>
</organism>
<dbReference type="EC" id="2.5.1.145" evidence="1"/>
<dbReference type="EMBL" id="CP000151">
    <property type="protein sequence ID" value="ABB09385.1"/>
    <property type="molecule type" value="Genomic_DNA"/>
</dbReference>
<dbReference type="RefSeq" id="WP_011352909.1">
    <property type="nucleotide sequence ID" value="NZ_WNDV01000008.1"/>
</dbReference>
<dbReference type="SMR" id="Q39DT1"/>
<dbReference type="GeneID" id="45095675"/>
<dbReference type="KEGG" id="bur:Bcep18194_A5791"/>
<dbReference type="PATRIC" id="fig|482957.22.peg.2775"/>
<dbReference type="HOGENOM" id="CLU_013386_1_0_4"/>
<dbReference type="UniPathway" id="UPA00664"/>
<dbReference type="Proteomes" id="UP000002705">
    <property type="component" value="Chromosome 1"/>
</dbReference>
<dbReference type="GO" id="GO:0005886">
    <property type="term" value="C:plasma membrane"/>
    <property type="evidence" value="ECO:0007669"/>
    <property type="project" value="UniProtKB-SubCell"/>
</dbReference>
<dbReference type="GO" id="GO:0008961">
    <property type="term" value="F:phosphatidylglycerol-prolipoprotein diacylglyceryl transferase activity"/>
    <property type="evidence" value="ECO:0007669"/>
    <property type="project" value="UniProtKB-UniRule"/>
</dbReference>
<dbReference type="GO" id="GO:0042158">
    <property type="term" value="P:lipoprotein biosynthetic process"/>
    <property type="evidence" value="ECO:0007669"/>
    <property type="project" value="UniProtKB-UniRule"/>
</dbReference>
<dbReference type="HAMAP" id="MF_01147">
    <property type="entry name" value="Lgt"/>
    <property type="match status" value="1"/>
</dbReference>
<dbReference type="InterPro" id="IPR001640">
    <property type="entry name" value="Lgt"/>
</dbReference>
<dbReference type="NCBIfam" id="TIGR00544">
    <property type="entry name" value="lgt"/>
    <property type="match status" value="1"/>
</dbReference>
<dbReference type="PANTHER" id="PTHR30589:SF0">
    <property type="entry name" value="PHOSPHATIDYLGLYCEROL--PROLIPOPROTEIN DIACYLGLYCERYL TRANSFERASE"/>
    <property type="match status" value="1"/>
</dbReference>
<dbReference type="PANTHER" id="PTHR30589">
    <property type="entry name" value="PROLIPOPROTEIN DIACYLGLYCERYL TRANSFERASE"/>
    <property type="match status" value="1"/>
</dbReference>
<dbReference type="Pfam" id="PF01790">
    <property type="entry name" value="LGT"/>
    <property type="match status" value="1"/>
</dbReference>
<dbReference type="PROSITE" id="PS01311">
    <property type="entry name" value="LGT"/>
    <property type="match status" value="1"/>
</dbReference>
<evidence type="ECO:0000255" key="1">
    <source>
        <dbReference type="HAMAP-Rule" id="MF_01147"/>
    </source>
</evidence>
<comment type="function">
    <text evidence="1">Catalyzes the transfer of the diacylglyceryl group from phosphatidylglycerol to the sulfhydryl group of the N-terminal cysteine of a prolipoprotein, the first step in the formation of mature lipoproteins.</text>
</comment>
<comment type="catalytic activity">
    <reaction evidence="1">
        <text>L-cysteinyl-[prolipoprotein] + a 1,2-diacyl-sn-glycero-3-phospho-(1'-sn-glycerol) = an S-1,2-diacyl-sn-glyceryl-L-cysteinyl-[prolipoprotein] + sn-glycerol 1-phosphate + H(+)</text>
        <dbReference type="Rhea" id="RHEA:56712"/>
        <dbReference type="Rhea" id="RHEA-COMP:14679"/>
        <dbReference type="Rhea" id="RHEA-COMP:14680"/>
        <dbReference type="ChEBI" id="CHEBI:15378"/>
        <dbReference type="ChEBI" id="CHEBI:29950"/>
        <dbReference type="ChEBI" id="CHEBI:57685"/>
        <dbReference type="ChEBI" id="CHEBI:64716"/>
        <dbReference type="ChEBI" id="CHEBI:140658"/>
        <dbReference type="EC" id="2.5.1.145"/>
    </reaction>
</comment>
<comment type="pathway">
    <text evidence="1">Protein modification; lipoprotein biosynthesis (diacylglyceryl transfer).</text>
</comment>
<comment type="subcellular location">
    <subcellularLocation>
        <location evidence="1">Cell inner membrane</location>
        <topology evidence="1">Multi-pass membrane protein</topology>
    </subcellularLocation>
</comment>
<comment type="similarity">
    <text evidence="1">Belongs to the Lgt family.</text>
</comment>
<sequence length="296" mass="33194">MIIHPNFDPVAIHLGPLAVRWYGLMYLVGFIAAIVVGRIRLKLPHVAAQGWTAKDIDDMMFYGVLGTVLGGRLGYVLFYKADFYFSHPLDVFKVWEGGMSFHGGFLGVTLAMMLFAWQRKRHWLQVTDFVAPMVPTGLAAGRLGNFINGELWGRVTDPSAPWAMLFPGAMRDDAAWLPKHPELVEKWHLADVFMQYQMLPRHPSQLYEIALEGIVLFFALFLFARKSRPMGAVSALFLIGYGLARFTVEFAREPDDFLGLLALGLSMGQWLSLPMILAGVALMVWAYRRRAANAAA</sequence>
<proteinExistence type="inferred from homology"/>
<name>LGT_BURL3</name>
<feature type="chain" id="PRO_1000053405" description="Phosphatidylglycerol--prolipoprotein diacylglyceryl transferase">
    <location>
        <begin position="1"/>
        <end position="296"/>
    </location>
</feature>
<feature type="transmembrane region" description="Helical" evidence="1">
    <location>
        <begin position="17"/>
        <end position="37"/>
    </location>
</feature>
<feature type="transmembrane region" description="Helical" evidence="1">
    <location>
        <begin position="59"/>
        <end position="79"/>
    </location>
</feature>
<feature type="transmembrane region" description="Helical" evidence="1">
    <location>
        <begin position="97"/>
        <end position="117"/>
    </location>
</feature>
<feature type="transmembrane region" description="Helical" evidence="1">
    <location>
        <begin position="230"/>
        <end position="250"/>
    </location>
</feature>
<feature type="transmembrane region" description="Helical" evidence="1">
    <location>
        <begin position="257"/>
        <end position="277"/>
    </location>
</feature>
<feature type="binding site" evidence="1">
    <location>
        <position position="142"/>
    </location>
    <ligand>
        <name>a 1,2-diacyl-sn-glycero-3-phospho-(1'-sn-glycerol)</name>
        <dbReference type="ChEBI" id="CHEBI:64716"/>
    </ligand>
</feature>
<protein>
    <recommendedName>
        <fullName evidence="1">Phosphatidylglycerol--prolipoprotein diacylglyceryl transferase</fullName>
        <ecNumber evidence="1">2.5.1.145</ecNumber>
    </recommendedName>
</protein>